<dbReference type="EC" id="2.3.2.27"/>
<dbReference type="EMBL" id="BC123709">
    <property type="protein sequence ID" value="AAI23710.1"/>
    <property type="molecule type" value="mRNA"/>
</dbReference>
<dbReference type="RefSeq" id="NP_001070332.1">
    <property type="nucleotide sequence ID" value="NM_001076864.1"/>
</dbReference>
<dbReference type="FunCoup" id="Q08DK0">
    <property type="interactions" value="2999"/>
</dbReference>
<dbReference type="STRING" id="9913.ENSBTAP00000014663"/>
<dbReference type="PaxDb" id="9913-ENSBTAP00000014663"/>
<dbReference type="GeneID" id="518991"/>
<dbReference type="KEGG" id="bta:518991"/>
<dbReference type="CTD" id="92305"/>
<dbReference type="VEuPathDB" id="HostDB:ENSBTAG00000011042"/>
<dbReference type="eggNOG" id="KOG3899">
    <property type="taxonomic scope" value="Eukaryota"/>
</dbReference>
<dbReference type="InParanoid" id="Q08DK0"/>
<dbReference type="OMA" id="KFATGPP"/>
<dbReference type="OrthoDB" id="10055027at2759"/>
<dbReference type="UniPathway" id="UPA00143"/>
<dbReference type="Proteomes" id="UP000009136">
    <property type="component" value="Chromosome 6"/>
</dbReference>
<dbReference type="Bgee" id="ENSBTAG00000011042">
    <property type="expression patterns" value="Expressed in ileocecal valve and 104 other cell types or tissues"/>
</dbReference>
<dbReference type="GO" id="GO:0005783">
    <property type="term" value="C:endoplasmic reticulum"/>
    <property type="evidence" value="ECO:0000318"/>
    <property type="project" value="GO_Central"/>
</dbReference>
<dbReference type="GO" id="GO:0005789">
    <property type="term" value="C:endoplasmic reticulum membrane"/>
    <property type="evidence" value="ECO:0007669"/>
    <property type="project" value="UniProtKB-SubCell"/>
</dbReference>
<dbReference type="GO" id="GO:0061630">
    <property type="term" value="F:ubiquitin protein ligase activity"/>
    <property type="evidence" value="ECO:0000318"/>
    <property type="project" value="GO_Central"/>
</dbReference>
<dbReference type="GO" id="GO:0008270">
    <property type="term" value="F:zinc ion binding"/>
    <property type="evidence" value="ECO:0007669"/>
    <property type="project" value="UniProtKB-KW"/>
</dbReference>
<dbReference type="GO" id="GO:0016567">
    <property type="term" value="P:protein ubiquitination"/>
    <property type="evidence" value="ECO:0007669"/>
    <property type="project" value="UniProtKB-UniPathway"/>
</dbReference>
<dbReference type="GO" id="GO:0006986">
    <property type="term" value="P:response to unfolded protein"/>
    <property type="evidence" value="ECO:0007669"/>
    <property type="project" value="UniProtKB-KW"/>
</dbReference>
<dbReference type="InterPro" id="IPR018801">
    <property type="entry name" value="TM129"/>
</dbReference>
<dbReference type="PANTHER" id="PTHR31322">
    <property type="entry name" value="E3 UBIQUITIN-PROTEIN LIGASE TM129"/>
    <property type="match status" value="1"/>
</dbReference>
<dbReference type="PANTHER" id="PTHR31322:SF2">
    <property type="entry name" value="E3 UBIQUITIN-PROTEIN LIGASE TM129"/>
    <property type="match status" value="1"/>
</dbReference>
<dbReference type="Pfam" id="PF10272">
    <property type="entry name" value="Tmpp129"/>
    <property type="match status" value="1"/>
</dbReference>
<accession>Q08DK0</accession>
<sequence length="362" mass="40454">MDSPEVTFTLAYLVFAVCFVFTPTEFHSAGLTVQNLLSGWLGSEDAAFVPYHLRRTAATLLCHSLLPLGYYVGMCFAASEKQLYYPSQTPETWRAFLLLALMLPAIACTLIYYWSRDHWACHPLARTLALYALPRSGWQAVASSVNTEFRRIDKFATGVPGARVIVTDTWVMKVTTYRVHVAQQQDVRLTVTEAQQHELSPDSHLPVQLLTIRVASANPAVPAFHIRLNSTEYGELCEKLRAPIRSAANVVIHQSLGDLFLETFASLVEVNPAYSVPSSQDLEACIGCMQTQASVKLVKTCQEVAVGECQQCYCRPMWCLTCMGKWFASRQDPQRPDTWLASRVPCPTCRARFCVLDVCAVR</sequence>
<proteinExistence type="evidence at transcript level"/>
<name>TM129_BOVIN</name>
<gene>
    <name type="primary">TMEM129</name>
</gene>
<comment type="function">
    <text evidence="1">E3 ubiquitin-protein ligase involved in ER-associated protein degradation, preferentially associates with the E2 enzyme UBE2J2. Exploited by viral US11 proteins to mediate HLA class I proteins degradation.</text>
</comment>
<comment type="catalytic activity">
    <reaction>
        <text>S-ubiquitinyl-[E2 ubiquitin-conjugating enzyme]-L-cysteine + [acceptor protein]-L-lysine = [E2 ubiquitin-conjugating enzyme]-L-cysteine + N(6)-ubiquitinyl-[acceptor protein]-L-lysine.</text>
        <dbReference type="EC" id="2.3.2.27"/>
    </reaction>
</comment>
<comment type="pathway">
    <text>Protein modification; protein ubiquitination.</text>
</comment>
<comment type="subunit">
    <text evidence="1">Integral component of ER-resident dislocation complexes.</text>
</comment>
<comment type="subcellular location">
    <subcellularLocation>
        <location evidence="1">Endoplasmic reticulum membrane</location>
        <topology evidence="1">Multi-pass membrane protein</topology>
    </subcellularLocation>
</comment>
<comment type="domain">
    <text evidence="1">The RING-type zinc finger domain is responsible for E3 ubiquitin ligase activity.</text>
</comment>
<comment type="similarity">
    <text evidence="3">Belongs to the TMEM129 family.</text>
</comment>
<evidence type="ECO:0000250" key="1">
    <source>
        <dbReference type="UniProtKB" id="A0AVI4"/>
    </source>
</evidence>
<evidence type="ECO:0000255" key="2"/>
<evidence type="ECO:0000305" key="3"/>
<keyword id="KW-0256">Endoplasmic reticulum</keyword>
<keyword id="KW-0472">Membrane</keyword>
<keyword id="KW-0479">Metal-binding</keyword>
<keyword id="KW-1185">Reference proteome</keyword>
<keyword id="KW-0808">Transferase</keyword>
<keyword id="KW-0812">Transmembrane</keyword>
<keyword id="KW-1133">Transmembrane helix</keyword>
<keyword id="KW-0833">Ubl conjugation pathway</keyword>
<keyword id="KW-0834">Unfolded protein response</keyword>
<keyword id="KW-0862">Zinc</keyword>
<keyword id="KW-0863">Zinc-finger</keyword>
<feature type="chain" id="PRO_0000291040" description="E3 ubiquitin-protein ligase TM129">
    <location>
        <begin position="1"/>
        <end position="362"/>
    </location>
</feature>
<feature type="topological domain" description="Lumenal" evidence="2">
    <location>
        <begin position="1"/>
        <end position="6"/>
    </location>
</feature>
<feature type="transmembrane region" description="Helical" evidence="2">
    <location>
        <begin position="7"/>
        <end position="27"/>
    </location>
</feature>
<feature type="topological domain" description="Cytoplasmic" evidence="2">
    <location>
        <begin position="28"/>
        <end position="56"/>
    </location>
</feature>
<feature type="transmembrane region" description="Helical" evidence="2">
    <location>
        <begin position="57"/>
        <end position="77"/>
    </location>
</feature>
<feature type="topological domain" description="Lumenal" evidence="2">
    <location>
        <begin position="78"/>
        <end position="94"/>
    </location>
</feature>
<feature type="transmembrane region" description="Helical" evidence="2">
    <location>
        <begin position="95"/>
        <end position="115"/>
    </location>
</feature>
<feature type="topological domain" description="Cytoplasmic" evidence="2">
    <location>
        <begin position="116"/>
        <end position="362"/>
    </location>
</feature>
<feature type="zinc finger region" description="RING-type; degenerate">
    <location>
        <begin position="285"/>
        <end position="350"/>
    </location>
</feature>
<reference key="1">
    <citation type="submission" date="2006-09" db="EMBL/GenBank/DDBJ databases">
        <authorList>
            <consortium name="NIH - Mammalian Gene Collection (MGC) project"/>
        </authorList>
    </citation>
    <scope>NUCLEOTIDE SEQUENCE [LARGE SCALE MRNA]</scope>
    <source>
        <strain>Hereford</strain>
        <tissue>Thalamus</tissue>
    </source>
</reference>
<organism>
    <name type="scientific">Bos taurus</name>
    <name type="common">Bovine</name>
    <dbReference type="NCBI Taxonomy" id="9913"/>
    <lineage>
        <taxon>Eukaryota</taxon>
        <taxon>Metazoa</taxon>
        <taxon>Chordata</taxon>
        <taxon>Craniata</taxon>
        <taxon>Vertebrata</taxon>
        <taxon>Euteleostomi</taxon>
        <taxon>Mammalia</taxon>
        <taxon>Eutheria</taxon>
        <taxon>Laurasiatheria</taxon>
        <taxon>Artiodactyla</taxon>
        <taxon>Ruminantia</taxon>
        <taxon>Pecora</taxon>
        <taxon>Bovidae</taxon>
        <taxon>Bovinae</taxon>
        <taxon>Bos</taxon>
    </lineage>
</organism>
<protein>
    <recommendedName>
        <fullName>E3 ubiquitin-protein ligase TM129</fullName>
        <ecNumber>2.3.2.27</ecNumber>
    </recommendedName>
    <alternativeName>
        <fullName evidence="3">RING-type E3 ubiquitin transferase TM129</fullName>
    </alternativeName>
</protein>